<evidence type="ECO:0000255" key="1">
    <source>
        <dbReference type="PROSITE-ProRule" id="PRU00543"/>
    </source>
</evidence>
<evidence type="ECO:0000255" key="2">
    <source>
        <dbReference type="PROSITE-ProRule" id="PRU00544"/>
    </source>
</evidence>
<gene>
    <name type="ordered locus">MG323</name>
</gene>
<protein>
    <recommendedName>
        <fullName>Uncharacterized protein MG323</fullName>
    </recommendedName>
</protein>
<feature type="chain" id="PRO_0000210539" description="Uncharacterized protein MG323">
    <location>
        <begin position="1"/>
        <end position="227"/>
    </location>
</feature>
<feature type="domain" description="RCK N-terminal" evidence="1">
    <location>
        <begin position="3"/>
        <end position="119"/>
    </location>
</feature>
<feature type="domain" description="RCK C-terminal" evidence="2">
    <location>
        <begin position="134"/>
        <end position="221"/>
    </location>
</feature>
<organism>
    <name type="scientific">Mycoplasma genitalium (strain ATCC 33530 / DSM 19775 / NCTC 10195 / G37)</name>
    <name type="common">Mycoplasmoides genitalium</name>
    <dbReference type="NCBI Taxonomy" id="243273"/>
    <lineage>
        <taxon>Bacteria</taxon>
        <taxon>Bacillati</taxon>
        <taxon>Mycoplasmatota</taxon>
        <taxon>Mycoplasmoidales</taxon>
        <taxon>Mycoplasmoidaceae</taxon>
        <taxon>Mycoplasmoides</taxon>
    </lineage>
</organism>
<reference key="1">
    <citation type="journal article" date="1995" name="Science">
        <title>The minimal gene complement of Mycoplasma genitalium.</title>
        <authorList>
            <person name="Fraser C.M."/>
            <person name="Gocayne J.D."/>
            <person name="White O."/>
            <person name="Adams M.D."/>
            <person name="Clayton R.A."/>
            <person name="Fleischmann R.D."/>
            <person name="Bult C.J."/>
            <person name="Kerlavage A.R."/>
            <person name="Sutton G.G."/>
            <person name="Kelley J.M."/>
            <person name="Fritchman J.L."/>
            <person name="Weidman J.F."/>
            <person name="Small K.V."/>
            <person name="Sandusky M."/>
            <person name="Fuhrmann J.L."/>
            <person name="Nguyen D.T."/>
            <person name="Utterback T.R."/>
            <person name="Saudek D.M."/>
            <person name="Phillips C.A."/>
            <person name="Merrick J.M."/>
            <person name="Tomb J.-F."/>
            <person name="Dougherty B.A."/>
            <person name="Bott K.F."/>
            <person name="Hu P.-C."/>
            <person name="Lucier T.S."/>
            <person name="Peterson S.N."/>
            <person name="Smith H.O."/>
            <person name="Hutchison C.A. III"/>
            <person name="Venter J.C."/>
        </authorList>
    </citation>
    <scope>NUCLEOTIDE SEQUENCE [LARGE SCALE GENOMIC DNA]</scope>
    <source>
        <strain>ATCC 33530 / DSM 19775 / NCTC 10195 / G37</strain>
    </source>
</reference>
<keyword id="KW-1185">Reference proteome</keyword>
<proteinExistence type="predicted"/>
<dbReference type="EMBL" id="L43967">
    <property type="protein sequence ID" value="AAC71545.1"/>
    <property type="molecule type" value="Genomic_DNA"/>
</dbReference>
<dbReference type="PIR" id="G64235">
    <property type="entry name" value="G64235"/>
</dbReference>
<dbReference type="RefSeq" id="WP_010869432.1">
    <property type="nucleotide sequence ID" value="NC_000908.2"/>
</dbReference>
<dbReference type="SMR" id="P47565"/>
<dbReference type="FunCoup" id="P47565">
    <property type="interactions" value="46"/>
</dbReference>
<dbReference type="STRING" id="243273.MG_323"/>
<dbReference type="GeneID" id="88282495"/>
<dbReference type="KEGG" id="mge:MG_323"/>
<dbReference type="eggNOG" id="COG0569">
    <property type="taxonomic scope" value="Bacteria"/>
</dbReference>
<dbReference type="HOGENOM" id="CLU_046525_3_2_14"/>
<dbReference type="InParanoid" id="P47565"/>
<dbReference type="OrthoDB" id="9776294at2"/>
<dbReference type="BioCyc" id="MGEN243273:G1GJ2-402-MONOMER"/>
<dbReference type="Proteomes" id="UP000000807">
    <property type="component" value="Chromosome"/>
</dbReference>
<dbReference type="GO" id="GO:0008324">
    <property type="term" value="F:monoatomic cation transmembrane transporter activity"/>
    <property type="evidence" value="ECO:0007669"/>
    <property type="project" value="InterPro"/>
</dbReference>
<dbReference type="GO" id="GO:0006813">
    <property type="term" value="P:potassium ion transport"/>
    <property type="evidence" value="ECO:0007669"/>
    <property type="project" value="InterPro"/>
</dbReference>
<dbReference type="Gene3D" id="3.40.50.720">
    <property type="entry name" value="NAD(P)-binding Rossmann-like Domain"/>
    <property type="match status" value="1"/>
</dbReference>
<dbReference type="Gene3D" id="3.30.70.1450">
    <property type="entry name" value="Regulator of K+ conductance, C-terminal domain"/>
    <property type="match status" value="1"/>
</dbReference>
<dbReference type="InterPro" id="IPR036291">
    <property type="entry name" value="NAD(P)-bd_dom_sf"/>
</dbReference>
<dbReference type="InterPro" id="IPR006037">
    <property type="entry name" value="RCK_C"/>
</dbReference>
<dbReference type="InterPro" id="IPR036721">
    <property type="entry name" value="RCK_C_sf"/>
</dbReference>
<dbReference type="InterPro" id="IPR003148">
    <property type="entry name" value="RCK_N"/>
</dbReference>
<dbReference type="InterPro" id="IPR050721">
    <property type="entry name" value="Trk_Ktr_HKT_K-transport"/>
</dbReference>
<dbReference type="PANTHER" id="PTHR43833:SF7">
    <property type="entry name" value="KTR SYSTEM POTASSIUM UPTAKE PROTEIN C"/>
    <property type="match status" value="1"/>
</dbReference>
<dbReference type="PANTHER" id="PTHR43833">
    <property type="entry name" value="POTASSIUM CHANNEL PROTEIN 2-RELATED-RELATED"/>
    <property type="match status" value="1"/>
</dbReference>
<dbReference type="Pfam" id="PF02080">
    <property type="entry name" value="TrkA_C"/>
    <property type="match status" value="1"/>
</dbReference>
<dbReference type="Pfam" id="PF02254">
    <property type="entry name" value="TrkA_N"/>
    <property type="match status" value="1"/>
</dbReference>
<dbReference type="SUPFAM" id="SSF51735">
    <property type="entry name" value="NAD(P)-binding Rossmann-fold domains"/>
    <property type="match status" value="1"/>
</dbReference>
<dbReference type="SUPFAM" id="SSF116726">
    <property type="entry name" value="TrkA C-terminal domain-like"/>
    <property type="match status" value="1"/>
</dbReference>
<dbReference type="PROSITE" id="PS51202">
    <property type="entry name" value="RCK_C"/>
    <property type="match status" value="1"/>
</dbReference>
<dbReference type="PROSITE" id="PS51201">
    <property type="entry name" value="RCK_N"/>
    <property type="match status" value="1"/>
</dbReference>
<accession>P47565</accession>
<sequence length="227" mass="25494">MKRADFCIIGLGRFGMQVAQSLKENNFNLLLIDLDDKKTDTASQQFDYVICCDASNLTALEELQIDEFAGVIVGVTNIEASIMICANLRELGQKNIIAKAKNEVHKRVLSTMGIREALIPEKIVGKNLVIRLIHGLENEIINLGNEIIFIRSAVNNKAFFNKRLEEINFRQNTDANIISIMRSNKTVVFPLGPNTEIQPGDIITAVCQQKSLNKYLNYINPKTKNKN</sequence>
<name>Y323_MYCGE</name>